<name>HACD2_HUMAN</name>
<dbReference type="EC" id="4.2.1.134" evidence="5"/>
<dbReference type="EMBL" id="AY191814">
    <property type="protein sequence ID" value="AAP20101.1"/>
    <property type="molecule type" value="mRNA"/>
</dbReference>
<dbReference type="EMBL" id="AK289983">
    <property type="protein sequence ID" value="BAF82672.1"/>
    <property type="molecule type" value="mRNA"/>
</dbReference>
<dbReference type="EMBL" id="AC020631">
    <property type="status" value="NOT_ANNOTATED_CDS"/>
    <property type="molecule type" value="Genomic_DNA"/>
</dbReference>
<dbReference type="EMBL" id="AC023165">
    <property type="status" value="NOT_ANNOTATED_CDS"/>
    <property type="molecule type" value="Genomic_DNA"/>
</dbReference>
<dbReference type="EMBL" id="AC025571">
    <property type="status" value="NOT_ANNOTATED_CDS"/>
    <property type="molecule type" value="Genomic_DNA"/>
</dbReference>
<dbReference type="EMBL" id="AC084039">
    <property type="status" value="NOT_ANNOTATED_CDS"/>
    <property type="molecule type" value="Genomic_DNA"/>
</dbReference>
<dbReference type="EMBL" id="BC049369">
    <property type="protein sequence ID" value="AAH49369.1"/>
    <property type="molecule type" value="mRNA"/>
</dbReference>
<dbReference type="EMBL" id="BC060839">
    <property type="protein sequence ID" value="AAH60839.1"/>
    <property type="molecule type" value="mRNA"/>
</dbReference>
<dbReference type="CCDS" id="CCDS46895.1"/>
<dbReference type="RefSeq" id="NP_940684.1">
    <property type="nucleotide sequence ID" value="NM_198402.5"/>
</dbReference>
<dbReference type="BioGRID" id="128393">
    <property type="interactions" value="99"/>
</dbReference>
<dbReference type="FunCoup" id="Q6Y1H2">
    <property type="interactions" value="1955"/>
</dbReference>
<dbReference type="IntAct" id="Q6Y1H2">
    <property type="interactions" value="61"/>
</dbReference>
<dbReference type="STRING" id="9606.ENSP00000373153"/>
<dbReference type="SwissLipids" id="SLP:000000438"/>
<dbReference type="GlyCosmos" id="Q6Y1H2">
    <property type="glycosylation" value="1 site, No reported glycans"/>
</dbReference>
<dbReference type="GlyGen" id="Q6Y1H2">
    <property type="glycosylation" value="2 sites, 1 O-linked glycan (1 site)"/>
</dbReference>
<dbReference type="iPTMnet" id="Q6Y1H2"/>
<dbReference type="PhosphoSitePlus" id="Q6Y1H2"/>
<dbReference type="SwissPalm" id="Q6Y1H2"/>
<dbReference type="BioMuta" id="HACD2"/>
<dbReference type="DMDM" id="74738322"/>
<dbReference type="jPOST" id="Q6Y1H2"/>
<dbReference type="MassIVE" id="Q6Y1H2"/>
<dbReference type="PaxDb" id="9606-ENSP00000373153"/>
<dbReference type="PeptideAtlas" id="Q6Y1H2"/>
<dbReference type="ProteomicsDB" id="67831"/>
<dbReference type="Pumba" id="Q6Y1H2"/>
<dbReference type="TopDownProteomics" id="Q6Y1H2"/>
<dbReference type="Antibodypedia" id="32955">
    <property type="antibodies" value="84 antibodies from 15 providers"/>
</dbReference>
<dbReference type="DNASU" id="201562"/>
<dbReference type="Ensembl" id="ENST00000383657.10">
    <property type="protein sequence ID" value="ENSP00000373153.5"/>
    <property type="gene ID" value="ENSG00000206527.10"/>
</dbReference>
<dbReference type="GeneID" id="201562"/>
<dbReference type="KEGG" id="hsa:201562"/>
<dbReference type="MANE-Select" id="ENST00000383657.10">
    <property type="protein sequence ID" value="ENSP00000373153.5"/>
    <property type="RefSeq nucleotide sequence ID" value="NM_198402.5"/>
    <property type="RefSeq protein sequence ID" value="NP_940684.1"/>
</dbReference>
<dbReference type="UCSC" id="uc003egj.3">
    <property type="organism name" value="human"/>
</dbReference>
<dbReference type="AGR" id="HGNC:9640"/>
<dbReference type="CTD" id="201562"/>
<dbReference type="DisGeNET" id="201562"/>
<dbReference type="GeneCards" id="HACD2"/>
<dbReference type="HGNC" id="HGNC:9640">
    <property type="gene designation" value="HACD2"/>
</dbReference>
<dbReference type="HPA" id="ENSG00000206527">
    <property type="expression patterns" value="Low tissue specificity"/>
</dbReference>
<dbReference type="MIM" id="615939">
    <property type="type" value="gene"/>
</dbReference>
<dbReference type="neXtProt" id="NX_Q6Y1H2"/>
<dbReference type="OpenTargets" id="ENSG00000206527"/>
<dbReference type="PharmGKB" id="PA33983"/>
<dbReference type="VEuPathDB" id="HostDB:ENSG00000206527"/>
<dbReference type="eggNOG" id="KOG3187">
    <property type="taxonomic scope" value="Eukaryota"/>
</dbReference>
<dbReference type="GeneTree" id="ENSGT00530000062962"/>
<dbReference type="HOGENOM" id="CLU_034302_2_0_1"/>
<dbReference type="InParanoid" id="Q6Y1H2"/>
<dbReference type="OMA" id="SEWWLMY"/>
<dbReference type="OrthoDB" id="46988at2759"/>
<dbReference type="PAN-GO" id="Q6Y1H2">
    <property type="GO annotations" value="5 GO annotations based on evolutionary models"/>
</dbReference>
<dbReference type="PhylomeDB" id="Q6Y1H2"/>
<dbReference type="TreeFam" id="TF313326"/>
<dbReference type="PathwayCommons" id="Q6Y1H2"/>
<dbReference type="Reactome" id="R-HSA-75876">
    <property type="pathway name" value="Synthesis of very long-chain fatty acyl-CoAs"/>
</dbReference>
<dbReference type="SABIO-RK" id="Q6Y1H2"/>
<dbReference type="SignaLink" id="Q6Y1H2"/>
<dbReference type="SIGNOR" id="Q6Y1H2"/>
<dbReference type="UniPathway" id="UPA00094"/>
<dbReference type="BioGRID-ORCS" id="201562">
    <property type="hits" value="34 hits in 1156 CRISPR screens"/>
</dbReference>
<dbReference type="ChiTaRS" id="HACD2">
    <property type="organism name" value="human"/>
</dbReference>
<dbReference type="GenomeRNAi" id="201562"/>
<dbReference type="Pharos" id="Q6Y1H2">
    <property type="development level" value="Tbio"/>
</dbReference>
<dbReference type="PRO" id="PR:Q6Y1H2"/>
<dbReference type="Proteomes" id="UP000005640">
    <property type="component" value="Chromosome 3"/>
</dbReference>
<dbReference type="RNAct" id="Q6Y1H2">
    <property type="molecule type" value="protein"/>
</dbReference>
<dbReference type="Bgee" id="ENSG00000206527">
    <property type="expression patterns" value="Expressed in gingival epithelium and 208 other cell types or tissues"/>
</dbReference>
<dbReference type="ExpressionAtlas" id="Q6Y1H2">
    <property type="expression patterns" value="baseline and differential"/>
</dbReference>
<dbReference type="GO" id="GO:0005783">
    <property type="term" value="C:endoplasmic reticulum"/>
    <property type="evidence" value="ECO:0000314"/>
    <property type="project" value="UniProtKB"/>
</dbReference>
<dbReference type="GO" id="GO:0005789">
    <property type="term" value="C:endoplasmic reticulum membrane"/>
    <property type="evidence" value="ECO:0000318"/>
    <property type="project" value="GO_Central"/>
</dbReference>
<dbReference type="GO" id="GO:0018812">
    <property type="term" value="F:3-hydroxyacyl-CoA dehydratase activity"/>
    <property type="evidence" value="ECO:0000269"/>
    <property type="project" value="Reactome"/>
</dbReference>
<dbReference type="GO" id="GO:0019899">
    <property type="term" value="F:enzyme binding"/>
    <property type="evidence" value="ECO:0000314"/>
    <property type="project" value="UniProtKB"/>
</dbReference>
<dbReference type="GO" id="GO:0102158">
    <property type="term" value="F:very-long-chain (3R)-3-hydroxyacyl-CoA dehydratase activity"/>
    <property type="evidence" value="ECO:0000314"/>
    <property type="project" value="UniProtKB"/>
</dbReference>
<dbReference type="GO" id="GO:0030497">
    <property type="term" value="P:fatty acid elongation"/>
    <property type="evidence" value="ECO:0000314"/>
    <property type="project" value="UniProtKB"/>
</dbReference>
<dbReference type="GO" id="GO:0035338">
    <property type="term" value="P:long-chain fatty-acyl-CoA biosynthetic process"/>
    <property type="evidence" value="ECO:0000304"/>
    <property type="project" value="Reactome"/>
</dbReference>
<dbReference type="GO" id="GO:0030148">
    <property type="term" value="P:sphingolipid biosynthetic process"/>
    <property type="evidence" value="ECO:0000316"/>
    <property type="project" value="UniProtKB"/>
</dbReference>
<dbReference type="GO" id="GO:0042761">
    <property type="term" value="P:very long-chain fatty acid biosynthetic process"/>
    <property type="evidence" value="ECO:0000314"/>
    <property type="project" value="UniProtKB"/>
</dbReference>
<dbReference type="InterPro" id="IPR007482">
    <property type="entry name" value="Tyr_Pase-like_PTPLA"/>
</dbReference>
<dbReference type="PANTHER" id="PTHR11035">
    <property type="entry name" value="VERY-LONG-CHAIN (3R)-3-HYDROXYACYL-COA DEHYDRATASE"/>
    <property type="match status" value="1"/>
</dbReference>
<dbReference type="PANTHER" id="PTHR11035:SF17">
    <property type="entry name" value="VERY-LONG-CHAIN (3R)-3-HYDROXYACYL-COA DEHYDRATASE 2"/>
    <property type="match status" value="1"/>
</dbReference>
<dbReference type="Pfam" id="PF04387">
    <property type="entry name" value="PTPLA"/>
    <property type="match status" value="1"/>
</dbReference>
<feature type="initiator methionine" description="Removed" evidence="12">
    <location>
        <position position="1"/>
    </location>
</feature>
<feature type="chain" id="PRO_0000349319" description="Very-long-chain (3R)-3-hydroxyacyl-CoA dehydratase 2">
    <location>
        <begin position="2"/>
        <end position="254"/>
    </location>
</feature>
<feature type="topological domain" description="Cytoplasmic" evidence="2">
    <location>
        <begin position="2"/>
        <end position="41"/>
    </location>
</feature>
<feature type="transmembrane region" description="Helical" evidence="2">
    <location>
        <begin position="42"/>
        <end position="60"/>
    </location>
</feature>
<feature type="topological domain" description="Lumenal" evidence="2">
    <location>
        <begin position="61"/>
        <end position="79"/>
    </location>
</feature>
<feature type="transmembrane region" description="Helical" evidence="2">
    <location>
        <begin position="80"/>
        <end position="97"/>
    </location>
</feature>
<feature type="topological domain" description="Cytoplasmic" evidence="2">
    <location>
        <begin position="98"/>
        <end position="107"/>
    </location>
</feature>
<feature type="transmembrane region" description="Helical" evidence="2">
    <location>
        <begin position="108"/>
        <end position="125"/>
    </location>
</feature>
<feature type="topological domain" description="Lumenal" evidence="2">
    <location>
        <begin position="126"/>
        <end position="130"/>
    </location>
</feature>
<feature type="transmembrane region" description="Helical" evidence="2">
    <location>
        <begin position="131"/>
        <end position="146"/>
    </location>
</feature>
<feature type="topological domain" description="Cytoplasmic" evidence="2">
    <location>
        <begin position="147"/>
        <end position="169"/>
    </location>
</feature>
<feature type="transmembrane region" description="Helical" evidence="2">
    <location>
        <begin position="170"/>
        <end position="187"/>
    </location>
</feature>
<feature type="topological domain" description="Lumenal" evidence="2">
    <location>
        <begin position="188"/>
        <end position="217"/>
    </location>
</feature>
<feature type="transmembrane region" description="Helical" evidence="2">
    <location>
        <begin position="218"/>
        <end position="235"/>
    </location>
</feature>
<feature type="topological domain" description="Cytoplasmic" evidence="2">
    <location>
        <begin position="236"/>
        <end position="254"/>
    </location>
</feature>
<feature type="region of interest" description="Disordered" evidence="3">
    <location>
        <begin position="11"/>
        <end position="33"/>
    </location>
</feature>
<feature type="region of interest" description="May be involved in interaction with TECR" evidence="7">
    <location>
        <begin position="198"/>
        <end position="214"/>
    </location>
</feature>
<feature type="compositionally biased region" description="Gly residues" evidence="3">
    <location>
        <begin position="12"/>
        <end position="21"/>
    </location>
</feature>
<feature type="active site" evidence="1">
    <location>
        <position position="176"/>
    </location>
</feature>
<feature type="active site" evidence="1">
    <location>
        <position position="183"/>
    </location>
</feature>
<feature type="modified residue" description="N-acetylalanine" evidence="6 12">
    <location>
        <position position="2"/>
    </location>
</feature>
<feature type="glycosylation site" description="N-linked (GlcNAc...) asparagine" evidence="2">
    <location>
        <position position="209"/>
    </location>
</feature>
<feature type="mutagenesis site" description="Does not restore any protein tyrosine phosphatase activity." evidence="4">
    <original>P</original>
    <variation>R</variation>
    <location>
        <position position="101"/>
    </location>
</feature>
<comment type="function">
    <text evidence="5">Catalyzes the third of the very long-chain fatty acids (VLCFA) elongation four-step cycle (condensation, reduction, dehydration, and reduction). This endoplasmic reticulum-elongation process is characterized by the addition of two carbons to the lipid chain through each cycle. This enzyme catalyzes the dehydration of the 3-hydroxyacyl-CoA intermediate into trans-2,3-enoyl-CoA, within each cycle of elongation. Therefore, it participates in the production of various VLCFAs involved in multiple biological processes as precursors of membrane lipids and lipid mediators.</text>
</comment>
<comment type="catalytic activity">
    <reaction evidence="5">
        <text>a very-long-chain (3R)-3-hydroxyacyl-CoA = a very-long-chain (2E)-enoyl-CoA + H2O</text>
        <dbReference type="Rhea" id="RHEA:45812"/>
        <dbReference type="ChEBI" id="CHEBI:15377"/>
        <dbReference type="ChEBI" id="CHEBI:83728"/>
        <dbReference type="ChEBI" id="CHEBI:85440"/>
        <dbReference type="EC" id="4.2.1.134"/>
    </reaction>
    <physiologicalReaction direction="left-to-right" evidence="10">
        <dbReference type="Rhea" id="RHEA:45813"/>
    </physiologicalReaction>
</comment>
<comment type="catalytic activity">
    <reaction evidence="5">
        <text>(3R)-hydroxyhexadecanoyl-CoA = (2E)-hexadecenoyl-CoA + H2O</text>
        <dbReference type="Rhea" id="RHEA:39159"/>
        <dbReference type="ChEBI" id="CHEBI:15377"/>
        <dbReference type="ChEBI" id="CHEBI:61526"/>
        <dbReference type="ChEBI" id="CHEBI:74278"/>
    </reaction>
    <physiologicalReaction direction="left-to-right" evidence="10">
        <dbReference type="Rhea" id="RHEA:39160"/>
    </physiologicalReaction>
</comment>
<comment type="catalytic activity">
    <reaction evidence="5">
        <text>(3R)-hydroxyoctadecanoyl-CoA = (2E)-octadecenoyl-CoA + H2O</text>
        <dbReference type="Rhea" id="RHEA:39155"/>
        <dbReference type="ChEBI" id="CHEBI:15377"/>
        <dbReference type="ChEBI" id="CHEBI:71412"/>
        <dbReference type="ChEBI" id="CHEBI:76374"/>
    </reaction>
    <physiologicalReaction direction="left-to-right" evidence="10">
        <dbReference type="Rhea" id="RHEA:39156"/>
    </physiologicalReaction>
</comment>
<comment type="catalytic activity">
    <reaction evidence="5">
        <text>(3R)-hydroxyeicosanoyl-CoA = (2E)-eicosenoyl-CoA + H2O</text>
        <dbReference type="Rhea" id="RHEA:39175"/>
        <dbReference type="ChEBI" id="CHEBI:15377"/>
        <dbReference type="ChEBI" id="CHEBI:74691"/>
        <dbReference type="ChEBI" id="CHEBI:76373"/>
    </reaction>
    <physiologicalReaction direction="left-to-right" evidence="10">
        <dbReference type="Rhea" id="RHEA:39176"/>
    </physiologicalReaction>
</comment>
<comment type="catalytic activity">
    <reaction evidence="5">
        <text>(3R)-hydroxydocosanoyl-CoA = (2E)-docosenoyl-CoA + H2O</text>
        <dbReference type="Rhea" id="RHEA:39187"/>
        <dbReference type="ChEBI" id="CHEBI:15377"/>
        <dbReference type="ChEBI" id="CHEBI:74692"/>
        <dbReference type="ChEBI" id="CHEBI:76375"/>
    </reaction>
    <physiologicalReaction direction="left-to-right" evidence="10">
        <dbReference type="Rhea" id="RHEA:39188"/>
    </physiologicalReaction>
</comment>
<comment type="catalytic activity">
    <reaction evidence="5">
        <text>(3R)-hydroxytetracosanoyl-CoA = (2E)-tetracosenoyl-CoA + H2O</text>
        <dbReference type="Rhea" id="RHEA:39199"/>
        <dbReference type="ChEBI" id="CHEBI:15377"/>
        <dbReference type="ChEBI" id="CHEBI:74693"/>
        <dbReference type="ChEBI" id="CHEBI:76377"/>
    </reaction>
    <physiologicalReaction direction="left-to-right" evidence="10">
        <dbReference type="Rhea" id="RHEA:39200"/>
    </physiologicalReaction>
</comment>
<comment type="catalytic activity">
    <reaction evidence="5">
        <text>(3R)-hydroxyhexacosanoyl-CoA = (2E)-hexacosenoyl-CoA + H2O</text>
        <dbReference type="Rhea" id="RHEA:39211"/>
        <dbReference type="ChEBI" id="CHEBI:15377"/>
        <dbReference type="ChEBI" id="CHEBI:74281"/>
        <dbReference type="ChEBI" id="CHEBI:76378"/>
    </reaction>
    <physiologicalReaction direction="left-to-right" evidence="10">
        <dbReference type="Rhea" id="RHEA:39212"/>
    </physiologicalReaction>
</comment>
<comment type="biophysicochemical properties">
    <kinetics>
        <KM evidence="5">121.7 uM for 3-hydroxypalmitoyl-CoA (at 37 degrees Celsius)</KM>
    </kinetics>
</comment>
<comment type="pathway">
    <text evidence="5">Lipid metabolism; fatty acid biosynthesis.</text>
</comment>
<comment type="subunit">
    <text evidence="4 5 7">May interact with enzymes of the ELO family (including ELOVL1); with those enzymes that mediate condensation, the first of the four steps of the reaction cycle responsible for fatty acids elongation, may be part of a larger fatty acids elongase complex (PubMed:18554506). Interacts with BCAP31 (PubMed:15024066). Interacts (via the third lumenal loop) with TECR (PubMed:38422897).</text>
</comment>
<comment type="interaction">
    <interactant intactId="EBI-530257">
        <id>Q6Y1H2</id>
    </interactant>
    <interactant intactId="EBI-77683">
        <id>P51572</id>
        <label>BCAP31</label>
    </interactant>
    <organismsDiffer>false</organismsDiffer>
    <experiments>4</experiments>
</comment>
<comment type="interaction">
    <interactant intactId="EBI-530257">
        <id>Q6Y1H2</id>
    </interactant>
    <interactant intactId="EBI-6942903">
        <id>Q96BA8</id>
        <label>CREB3L1</label>
    </interactant>
    <organismsDiffer>false</organismsDiffer>
    <experiments>3</experiments>
</comment>
<comment type="interaction">
    <interactant intactId="EBI-530257">
        <id>Q6Y1H2</id>
    </interactant>
    <interactant intactId="EBI-18304435">
        <id>Q5JX71</id>
        <label>FAM209A</label>
    </interactant>
    <organismsDiffer>false</organismsDiffer>
    <experiments>3</experiments>
</comment>
<comment type="interaction">
    <interactant intactId="EBI-530257">
        <id>Q6Y1H2</id>
    </interactant>
    <interactant intactId="EBI-1031656">
        <id>Q13651</id>
        <label>IL10RA</label>
    </interactant>
    <organismsDiffer>false</organismsDiffer>
    <experiments>3</experiments>
</comment>
<comment type="interaction">
    <interactant intactId="EBI-530257">
        <id>Q6Y1H2</id>
    </interactant>
    <interactant intactId="EBI-12188413">
        <id>B2RUZ4</id>
        <label>SMIM1</label>
    </interactant>
    <organismsDiffer>false</organismsDiffer>
    <experiments>3</experiments>
</comment>
<comment type="interaction">
    <interactant intactId="EBI-530257">
        <id>Q6Y1H2</id>
    </interactant>
    <interactant intactId="EBI-2877718">
        <id>Q9NZ01</id>
        <label>TECR</label>
    </interactant>
    <organismsDiffer>false</organismsDiffer>
    <experiments>7</experiments>
</comment>
<comment type="interaction">
    <interactant intactId="EBI-530257">
        <id>Q6Y1H2</id>
    </interactant>
    <interactant intactId="EBI-6447886">
        <id>Q9Y320</id>
        <label>TMX2</label>
    </interactant>
    <organismsDiffer>false</organismsDiffer>
    <experiments>3</experiments>
</comment>
<comment type="subcellular location">
    <subcellularLocation>
        <location evidence="4 5">Endoplasmic reticulum membrane</location>
        <topology evidence="4 5">Multi-pass membrane protein</topology>
    </subcellularLocation>
</comment>
<comment type="tissue specificity">
    <text evidence="4">Highly expressed in testis, spleen, prostate, colon and heart, followed by moderate expression in thymus, ovary, small intestine, peripheral blood leukocytes, liver, skeletal muscle and pancreas. Weakly detected in kidney, placenta, brain and lung.</text>
</comment>
<comment type="miscellaneous">
    <text evidence="4">Turns over rapidly through degradation by the proteasome system.</text>
</comment>
<comment type="similarity">
    <text evidence="9">Belongs to the very long-chain fatty acids dehydratase HACD family.</text>
</comment>
<comment type="caution">
    <text evidence="4">Shares some similarity with tyrosine phosphatase proteins but it has probably no phosphatase activity.</text>
</comment>
<evidence type="ECO:0000250" key="1">
    <source>
        <dbReference type="UniProtKB" id="P40857"/>
    </source>
</evidence>
<evidence type="ECO:0000255" key="2"/>
<evidence type="ECO:0000256" key="3">
    <source>
        <dbReference type="SAM" id="MobiDB-lite"/>
    </source>
</evidence>
<evidence type="ECO:0000269" key="4">
    <source>
    </source>
</evidence>
<evidence type="ECO:0000269" key="5">
    <source>
    </source>
</evidence>
<evidence type="ECO:0000269" key="6">
    <source>
    </source>
</evidence>
<evidence type="ECO:0000269" key="7">
    <source>
    </source>
</evidence>
<evidence type="ECO:0000303" key="8">
    <source>
    </source>
</evidence>
<evidence type="ECO:0000305" key="9"/>
<evidence type="ECO:0000305" key="10">
    <source>
    </source>
</evidence>
<evidence type="ECO:0000312" key="11">
    <source>
        <dbReference type="HGNC" id="HGNC:9640"/>
    </source>
</evidence>
<evidence type="ECO:0007744" key="12">
    <source>
    </source>
</evidence>
<accession>Q6Y1H2</accession>
<gene>
    <name evidence="8 11" type="primary">HACD2</name>
    <name evidence="9" type="synonym">PTPLB</name>
</gene>
<keyword id="KW-0007">Acetylation</keyword>
<keyword id="KW-0256">Endoplasmic reticulum</keyword>
<keyword id="KW-0275">Fatty acid biosynthesis</keyword>
<keyword id="KW-0276">Fatty acid metabolism</keyword>
<keyword id="KW-0325">Glycoprotein</keyword>
<keyword id="KW-0444">Lipid biosynthesis</keyword>
<keyword id="KW-0443">Lipid metabolism</keyword>
<keyword id="KW-0456">Lyase</keyword>
<keyword id="KW-0472">Membrane</keyword>
<keyword id="KW-1267">Proteomics identification</keyword>
<keyword id="KW-1185">Reference proteome</keyword>
<keyword id="KW-0812">Transmembrane</keyword>
<keyword id="KW-1133">Transmembrane helix</keyword>
<reference key="1">
    <citation type="journal article" date="2004" name="Mol. Cell. Biol.">
        <title>The yeast split-ubiquitin membrane protein two-hybrid screen identifies BAP31 as a regulator of the turnover of endoplasmic reticulum-associated protein tyrosine phosphatase-like B.</title>
        <authorList>
            <person name="Wang B."/>
            <person name="Pelletier J."/>
            <person name="Massaad M.J."/>
            <person name="Herscovics A."/>
            <person name="Shore G.C."/>
        </authorList>
    </citation>
    <scope>NUCLEOTIDE SEQUENCE [MRNA]</scope>
    <scope>SUBCELLULAR LOCATION</scope>
    <scope>TISSUE SPECIFICITY</scope>
    <scope>INTERACTION WITH BCAP31</scope>
    <scope>MUTAGENESIS OF PRO-101</scope>
    <scope>CAUTION</scope>
</reference>
<reference key="2">
    <citation type="journal article" date="2004" name="Nat. Genet.">
        <title>Complete sequencing and characterization of 21,243 full-length human cDNAs.</title>
        <authorList>
            <person name="Ota T."/>
            <person name="Suzuki Y."/>
            <person name="Nishikawa T."/>
            <person name="Otsuki T."/>
            <person name="Sugiyama T."/>
            <person name="Irie R."/>
            <person name="Wakamatsu A."/>
            <person name="Hayashi K."/>
            <person name="Sato H."/>
            <person name="Nagai K."/>
            <person name="Kimura K."/>
            <person name="Makita H."/>
            <person name="Sekine M."/>
            <person name="Obayashi M."/>
            <person name="Nishi T."/>
            <person name="Shibahara T."/>
            <person name="Tanaka T."/>
            <person name="Ishii S."/>
            <person name="Yamamoto J."/>
            <person name="Saito K."/>
            <person name="Kawai Y."/>
            <person name="Isono Y."/>
            <person name="Nakamura Y."/>
            <person name="Nagahari K."/>
            <person name="Murakami K."/>
            <person name="Yasuda T."/>
            <person name="Iwayanagi T."/>
            <person name="Wagatsuma M."/>
            <person name="Shiratori A."/>
            <person name="Sudo H."/>
            <person name="Hosoiri T."/>
            <person name="Kaku Y."/>
            <person name="Kodaira H."/>
            <person name="Kondo H."/>
            <person name="Sugawara M."/>
            <person name="Takahashi M."/>
            <person name="Kanda K."/>
            <person name="Yokoi T."/>
            <person name="Furuya T."/>
            <person name="Kikkawa E."/>
            <person name="Omura Y."/>
            <person name="Abe K."/>
            <person name="Kamihara K."/>
            <person name="Katsuta N."/>
            <person name="Sato K."/>
            <person name="Tanikawa M."/>
            <person name="Yamazaki M."/>
            <person name="Ninomiya K."/>
            <person name="Ishibashi T."/>
            <person name="Yamashita H."/>
            <person name="Murakawa K."/>
            <person name="Fujimori K."/>
            <person name="Tanai H."/>
            <person name="Kimata M."/>
            <person name="Watanabe M."/>
            <person name="Hiraoka S."/>
            <person name="Chiba Y."/>
            <person name="Ishida S."/>
            <person name="Ono Y."/>
            <person name="Takiguchi S."/>
            <person name="Watanabe S."/>
            <person name="Yosida M."/>
            <person name="Hotuta T."/>
            <person name="Kusano J."/>
            <person name="Kanehori K."/>
            <person name="Takahashi-Fujii A."/>
            <person name="Hara H."/>
            <person name="Tanase T.-O."/>
            <person name="Nomura Y."/>
            <person name="Togiya S."/>
            <person name="Komai F."/>
            <person name="Hara R."/>
            <person name="Takeuchi K."/>
            <person name="Arita M."/>
            <person name="Imose N."/>
            <person name="Musashino K."/>
            <person name="Yuuki H."/>
            <person name="Oshima A."/>
            <person name="Sasaki N."/>
            <person name="Aotsuka S."/>
            <person name="Yoshikawa Y."/>
            <person name="Matsunawa H."/>
            <person name="Ichihara T."/>
            <person name="Shiohata N."/>
            <person name="Sano S."/>
            <person name="Moriya S."/>
            <person name="Momiyama H."/>
            <person name="Satoh N."/>
            <person name="Takami S."/>
            <person name="Terashima Y."/>
            <person name="Suzuki O."/>
            <person name="Nakagawa S."/>
            <person name="Senoh A."/>
            <person name="Mizoguchi H."/>
            <person name="Goto Y."/>
            <person name="Shimizu F."/>
            <person name="Wakebe H."/>
            <person name="Hishigaki H."/>
            <person name="Watanabe T."/>
            <person name="Sugiyama A."/>
            <person name="Takemoto M."/>
            <person name="Kawakami B."/>
            <person name="Yamazaki M."/>
            <person name="Watanabe K."/>
            <person name="Kumagai A."/>
            <person name="Itakura S."/>
            <person name="Fukuzumi Y."/>
            <person name="Fujimori Y."/>
            <person name="Komiyama M."/>
            <person name="Tashiro H."/>
            <person name="Tanigami A."/>
            <person name="Fujiwara T."/>
            <person name="Ono T."/>
            <person name="Yamada K."/>
            <person name="Fujii Y."/>
            <person name="Ozaki K."/>
            <person name="Hirao M."/>
            <person name="Ohmori Y."/>
            <person name="Kawabata A."/>
            <person name="Hikiji T."/>
            <person name="Kobatake N."/>
            <person name="Inagaki H."/>
            <person name="Ikema Y."/>
            <person name="Okamoto S."/>
            <person name="Okitani R."/>
            <person name="Kawakami T."/>
            <person name="Noguchi S."/>
            <person name="Itoh T."/>
            <person name="Shigeta K."/>
            <person name="Senba T."/>
            <person name="Matsumura K."/>
            <person name="Nakajima Y."/>
            <person name="Mizuno T."/>
            <person name="Morinaga M."/>
            <person name="Sasaki M."/>
            <person name="Togashi T."/>
            <person name="Oyama M."/>
            <person name="Hata H."/>
            <person name="Watanabe M."/>
            <person name="Komatsu T."/>
            <person name="Mizushima-Sugano J."/>
            <person name="Satoh T."/>
            <person name="Shirai Y."/>
            <person name="Takahashi Y."/>
            <person name="Nakagawa K."/>
            <person name="Okumura K."/>
            <person name="Nagase T."/>
            <person name="Nomura N."/>
            <person name="Kikuchi H."/>
            <person name="Masuho Y."/>
            <person name="Yamashita R."/>
            <person name="Nakai K."/>
            <person name="Yada T."/>
            <person name="Nakamura Y."/>
            <person name="Ohara O."/>
            <person name="Isogai T."/>
            <person name="Sugano S."/>
        </authorList>
    </citation>
    <scope>NUCLEOTIDE SEQUENCE [LARGE SCALE MRNA]</scope>
</reference>
<reference key="3">
    <citation type="journal article" date="2006" name="Nature">
        <title>The DNA sequence, annotation and analysis of human chromosome 3.</title>
        <authorList>
            <person name="Muzny D.M."/>
            <person name="Scherer S.E."/>
            <person name="Kaul R."/>
            <person name="Wang J."/>
            <person name="Yu J."/>
            <person name="Sudbrak R."/>
            <person name="Buhay C.J."/>
            <person name="Chen R."/>
            <person name="Cree A."/>
            <person name="Ding Y."/>
            <person name="Dugan-Rocha S."/>
            <person name="Gill R."/>
            <person name="Gunaratne P."/>
            <person name="Harris R.A."/>
            <person name="Hawes A.C."/>
            <person name="Hernandez J."/>
            <person name="Hodgson A.V."/>
            <person name="Hume J."/>
            <person name="Jackson A."/>
            <person name="Khan Z.M."/>
            <person name="Kovar-Smith C."/>
            <person name="Lewis L.R."/>
            <person name="Lozado R.J."/>
            <person name="Metzker M.L."/>
            <person name="Milosavljevic A."/>
            <person name="Miner G.R."/>
            <person name="Morgan M.B."/>
            <person name="Nazareth L.V."/>
            <person name="Scott G."/>
            <person name="Sodergren E."/>
            <person name="Song X.-Z."/>
            <person name="Steffen D."/>
            <person name="Wei S."/>
            <person name="Wheeler D.A."/>
            <person name="Wright M.W."/>
            <person name="Worley K.C."/>
            <person name="Yuan Y."/>
            <person name="Zhang Z."/>
            <person name="Adams C.Q."/>
            <person name="Ansari-Lari M.A."/>
            <person name="Ayele M."/>
            <person name="Brown M.J."/>
            <person name="Chen G."/>
            <person name="Chen Z."/>
            <person name="Clendenning J."/>
            <person name="Clerc-Blankenburg K.P."/>
            <person name="Chen R."/>
            <person name="Chen Z."/>
            <person name="Davis C."/>
            <person name="Delgado O."/>
            <person name="Dinh H.H."/>
            <person name="Dong W."/>
            <person name="Draper H."/>
            <person name="Ernst S."/>
            <person name="Fu G."/>
            <person name="Gonzalez-Garay M.L."/>
            <person name="Garcia D.K."/>
            <person name="Gillett W."/>
            <person name="Gu J."/>
            <person name="Hao B."/>
            <person name="Haugen E."/>
            <person name="Havlak P."/>
            <person name="He X."/>
            <person name="Hennig S."/>
            <person name="Hu S."/>
            <person name="Huang W."/>
            <person name="Jackson L.R."/>
            <person name="Jacob L.S."/>
            <person name="Kelly S.H."/>
            <person name="Kube M."/>
            <person name="Levy R."/>
            <person name="Li Z."/>
            <person name="Liu B."/>
            <person name="Liu J."/>
            <person name="Liu W."/>
            <person name="Lu J."/>
            <person name="Maheshwari M."/>
            <person name="Nguyen B.-V."/>
            <person name="Okwuonu G.O."/>
            <person name="Palmeiri A."/>
            <person name="Pasternak S."/>
            <person name="Perez L.M."/>
            <person name="Phelps K.A."/>
            <person name="Plopper F.J."/>
            <person name="Qiang B."/>
            <person name="Raymond C."/>
            <person name="Rodriguez R."/>
            <person name="Saenphimmachak C."/>
            <person name="Santibanez J."/>
            <person name="Shen H."/>
            <person name="Shen Y."/>
            <person name="Subramanian S."/>
            <person name="Tabor P.E."/>
            <person name="Verduzco D."/>
            <person name="Waldron L."/>
            <person name="Wang J."/>
            <person name="Wang J."/>
            <person name="Wang Q."/>
            <person name="Williams G.A."/>
            <person name="Wong G.K.-S."/>
            <person name="Yao Z."/>
            <person name="Zhang J."/>
            <person name="Zhang X."/>
            <person name="Zhao G."/>
            <person name="Zhou J."/>
            <person name="Zhou Y."/>
            <person name="Nelson D."/>
            <person name="Lehrach H."/>
            <person name="Reinhardt R."/>
            <person name="Naylor S.L."/>
            <person name="Yang H."/>
            <person name="Olson M."/>
            <person name="Weinstock G."/>
            <person name="Gibbs R.A."/>
        </authorList>
    </citation>
    <scope>NUCLEOTIDE SEQUENCE [LARGE SCALE GENOMIC DNA]</scope>
</reference>
<reference key="4">
    <citation type="journal article" date="2004" name="Genome Res.">
        <title>The status, quality, and expansion of the NIH full-length cDNA project: the Mammalian Gene Collection (MGC).</title>
        <authorList>
            <consortium name="The MGC Project Team"/>
        </authorList>
    </citation>
    <scope>NUCLEOTIDE SEQUENCE [LARGE SCALE MRNA]</scope>
    <source>
        <tissue>Brain</tissue>
        <tissue>Testis</tissue>
    </source>
</reference>
<reference key="5">
    <citation type="journal article" date="2008" name="FEBS Lett.">
        <title>Characterization of four mammalian 3-hydroxyacyl-CoA dehydratases involved in very long-chain fatty acid synthesis.</title>
        <authorList>
            <person name="Ikeda M."/>
            <person name="Kanao Y."/>
            <person name="Yamanaka M."/>
            <person name="Sakuraba H."/>
            <person name="Mizutani Y."/>
            <person name="Igarashi Y."/>
            <person name="Kihara A."/>
        </authorList>
    </citation>
    <scope>FUNCTION</scope>
    <scope>SUBCELLULAR LOCATION</scope>
    <scope>CATALYTIC ACTIVITY</scope>
    <scope>PATHWAY</scope>
    <scope>BIOPHYSICOCHEMICAL PROPERTIES</scope>
    <scope>SUBUNIT</scope>
</reference>
<reference key="6">
    <citation type="journal article" date="2009" name="Anal. Chem.">
        <title>Lys-N and trypsin cover complementary parts of the phosphoproteome in a refined SCX-based approach.</title>
        <authorList>
            <person name="Gauci S."/>
            <person name="Helbig A.O."/>
            <person name="Slijper M."/>
            <person name="Krijgsveld J."/>
            <person name="Heck A.J."/>
            <person name="Mohammed S."/>
        </authorList>
    </citation>
    <scope>ACETYLATION [LARGE SCALE ANALYSIS] AT ALA-2</scope>
    <scope>CLEAVAGE OF INITIATOR METHIONINE [LARGE SCALE ANALYSIS]</scope>
    <scope>IDENTIFICATION BY MASS SPECTROMETRY [LARGE SCALE ANALYSIS]</scope>
</reference>
<reference key="7">
    <citation type="journal article" date="2011" name="BMC Syst. Biol.">
        <title>Initial characterization of the human central proteome.</title>
        <authorList>
            <person name="Burkard T.R."/>
            <person name="Planyavsky M."/>
            <person name="Kaupe I."/>
            <person name="Breitwieser F.P."/>
            <person name="Buerckstuemmer T."/>
            <person name="Bennett K.L."/>
            <person name="Superti-Furga G."/>
            <person name="Colinge J."/>
        </authorList>
    </citation>
    <scope>IDENTIFICATION BY MASS SPECTROMETRY [LARGE SCALE ANALYSIS]</scope>
</reference>
<reference key="8">
    <citation type="journal article" date="2012" name="Proc. Natl. Acad. Sci. U.S.A.">
        <title>N-terminal acetylome analyses and functional insights of the N-terminal acetyltransferase NatB.</title>
        <authorList>
            <person name="Van Damme P."/>
            <person name="Lasa M."/>
            <person name="Polevoda B."/>
            <person name="Gazquez C."/>
            <person name="Elosegui-Artola A."/>
            <person name="Kim D.S."/>
            <person name="De Juan-Pardo E."/>
            <person name="Demeyer K."/>
            <person name="Hole K."/>
            <person name="Larrea E."/>
            <person name="Timmerman E."/>
            <person name="Prieto J."/>
            <person name="Arnesen T."/>
            <person name="Sherman F."/>
            <person name="Gevaert K."/>
            <person name="Aldabe R."/>
        </authorList>
    </citation>
    <scope>IDENTIFICATION BY MASS SPECTROMETRY [LARGE SCALE ANALYSIS]</scope>
</reference>
<reference key="9">
    <citation type="journal article" date="2014" name="J. Proteomics">
        <title>An enzyme assisted RP-RPLC approach for in-depth analysis of human liver phosphoproteome.</title>
        <authorList>
            <person name="Bian Y."/>
            <person name="Song C."/>
            <person name="Cheng K."/>
            <person name="Dong M."/>
            <person name="Wang F."/>
            <person name="Huang J."/>
            <person name="Sun D."/>
            <person name="Wang L."/>
            <person name="Ye M."/>
            <person name="Zou H."/>
        </authorList>
    </citation>
    <scope>IDENTIFICATION BY MASS SPECTROMETRY [LARGE SCALE ANALYSIS]</scope>
    <source>
        <tissue>Liver</tissue>
    </source>
</reference>
<reference key="10">
    <citation type="journal article" date="2015" name="Cell Rep.">
        <title>An organellar nalpha-acetyltransferase, naa60, acetylates cytosolic N termini of transmembrane proteins and maintains Golgi integrity.</title>
        <authorList>
            <person name="Aksnes H."/>
            <person name="Van Damme P."/>
            <person name="Goris M."/>
            <person name="Starheim K.K."/>
            <person name="Marie M."/>
            <person name="Stoeve S.I."/>
            <person name="Hoel C."/>
            <person name="Kalvik T.V."/>
            <person name="Hole K."/>
            <person name="Glomnes N."/>
            <person name="Furnes C."/>
            <person name="Ljostveit S."/>
            <person name="Ziegler M."/>
            <person name="Niere M."/>
            <person name="Gevaert K."/>
            <person name="Arnesen T."/>
        </authorList>
    </citation>
    <scope>ACETYLATION AT ALA-2</scope>
</reference>
<reference key="11">
    <citation type="journal article" date="2024" name="Biochem. Biophys. Res. Commun.">
        <title>The 3-hydroxyacyl-CoA dehydratase 1/2 form complex with trans-2-enoyl-CoA reductase involved in substrates transfer in very long chain fatty acid elongation.</title>
        <authorList>
            <person name="Zhou Y."/>
            <person name="Lv R."/>
            <person name="Ye R.D."/>
            <person name="Ren R."/>
            <person name="Yu L."/>
        </authorList>
    </citation>
    <scope>INTERACTION WITH TECR</scope>
</reference>
<protein>
    <recommendedName>
        <fullName evidence="9">Very-long-chain (3R)-3-hydroxyacyl-CoA dehydratase 2</fullName>
        <ecNumber evidence="5">4.2.1.134</ecNumber>
    </recommendedName>
    <alternativeName>
        <fullName evidence="8">3-hydroxyacyl-CoA dehydratase 2</fullName>
        <shortName evidence="8">HACD2</shortName>
    </alternativeName>
    <alternativeName>
        <fullName evidence="11">Protein-tyrosine phosphatase-like member B</fullName>
    </alternativeName>
</protein>
<sequence>MAAVAATAAAKGNGGGGGRAGAGDASGTRKKKGPGPLATAYLVIYNVVMTAGWLVIAVGLVRAYLAKGSYHSLYYSIEKPLKFFQTGALLEILHCAIGIVPSSVVLTSFQVMSRVFLIWAVTHSVKEVQSEDSVLLFVIAWTITEIIRYSFYTFSLLNHLPYLIKWARYTLFIVLYPMGVSGELLTIYAALPFVRQAGLYSISLPNKYNFSFDYYAFLILIMISYIPIFPQLYFHMIHQRRKILSHTEEHKKFE</sequence>
<organism>
    <name type="scientific">Homo sapiens</name>
    <name type="common">Human</name>
    <dbReference type="NCBI Taxonomy" id="9606"/>
    <lineage>
        <taxon>Eukaryota</taxon>
        <taxon>Metazoa</taxon>
        <taxon>Chordata</taxon>
        <taxon>Craniata</taxon>
        <taxon>Vertebrata</taxon>
        <taxon>Euteleostomi</taxon>
        <taxon>Mammalia</taxon>
        <taxon>Eutheria</taxon>
        <taxon>Euarchontoglires</taxon>
        <taxon>Primates</taxon>
        <taxon>Haplorrhini</taxon>
        <taxon>Catarrhini</taxon>
        <taxon>Hominidae</taxon>
        <taxon>Homo</taxon>
    </lineage>
</organism>
<proteinExistence type="evidence at protein level"/>